<evidence type="ECO:0000255" key="1">
    <source>
        <dbReference type="HAMAP-Rule" id="MF_00537"/>
    </source>
</evidence>
<evidence type="ECO:0000305" key="2"/>
<accession>A9BBJ6</accession>
<keyword id="KW-1185">Reference proteome</keyword>
<keyword id="KW-0687">Ribonucleoprotein</keyword>
<keyword id="KW-0689">Ribosomal protein</keyword>
<keyword id="KW-0694">RNA-binding</keyword>
<keyword id="KW-0699">rRNA-binding</keyword>
<feature type="chain" id="PRO_1000128500" description="Small ribosomal subunit protein uS14">
    <location>
        <begin position="1"/>
        <end position="100"/>
    </location>
</feature>
<dbReference type="EMBL" id="CP000878">
    <property type="protein sequence ID" value="ABX09208.1"/>
    <property type="molecule type" value="Genomic_DNA"/>
</dbReference>
<dbReference type="RefSeq" id="WP_012195829.1">
    <property type="nucleotide sequence ID" value="NC_009976.1"/>
</dbReference>
<dbReference type="SMR" id="A9BBJ6"/>
<dbReference type="STRING" id="93059.P9211_12771"/>
<dbReference type="KEGG" id="pmj:P9211_12771"/>
<dbReference type="eggNOG" id="COG0199">
    <property type="taxonomic scope" value="Bacteria"/>
</dbReference>
<dbReference type="HOGENOM" id="CLU_139869_0_1_3"/>
<dbReference type="OrthoDB" id="9810484at2"/>
<dbReference type="Proteomes" id="UP000000788">
    <property type="component" value="Chromosome"/>
</dbReference>
<dbReference type="GO" id="GO:0005737">
    <property type="term" value="C:cytoplasm"/>
    <property type="evidence" value="ECO:0007669"/>
    <property type="project" value="UniProtKB-ARBA"/>
</dbReference>
<dbReference type="GO" id="GO:0015935">
    <property type="term" value="C:small ribosomal subunit"/>
    <property type="evidence" value="ECO:0007669"/>
    <property type="project" value="TreeGrafter"/>
</dbReference>
<dbReference type="GO" id="GO:0019843">
    <property type="term" value="F:rRNA binding"/>
    <property type="evidence" value="ECO:0007669"/>
    <property type="project" value="UniProtKB-UniRule"/>
</dbReference>
<dbReference type="GO" id="GO:0003735">
    <property type="term" value="F:structural constituent of ribosome"/>
    <property type="evidence" value="ECO:0007669"/>
    <property type="project" value="InterPro"/>
</dbReference>
<dbReference type="GO" id="GO:0006412">
    <property type="term" value="P:translation"/>
    <property type="evidence" value="ECO:0007669"/>
    <property type="project" value="UniProtKB-UniRule"/>
</dbReference>
<dbReference type="FunFam" id="1.10.287.1480:FF:000001">
    <property type="entry name" value="30S ribosomal protein S14"/>
    <property type="match status" value="1"/>
</dbReference>
<dbReference type="Gene3D" id="1.10.287.1480">
    <property type="match status" value="1"/>
</dbReference>
<dbReference type="HAMAP" id="MF_00537">
    <property type="entry name" value="Ribosomal_uS14_1"/>
    <property type="match status" value="1"/>
</dbReference>
<dbReference type="InterPro" id="IPR001209">
    <property type="entry name" value="Ribosomal_uS14"/>
</dbReference>
<dbReference type="InterPro" id="IPR023036">
    <property type="entry name" value="Ribosomal_uS14_bac/plastid"/>
</dbReference>
<dbReference type="InterPro" id="IPR018271">
    <property type="entry name" value="Ribosomal_uS14_CS"/>
</dbReference>
<dbReference type="NCBIfam" id="NF006477">
    <property type="entry name" value="PRK08881.1"/>
    <property type="match status" value="1"/>
</dbReference>
<dbReference type="PANTHER" id="PTHR19836">
    <property type="entry name" value="30S RIBOSOMAL PROTEIN S14"/>
    <property type="match status" value="1"/>
</dbReference>
<dbReference type="PANTHER" id="PTHR19836:SF19">
    <property type="entry name" value="SMALL RIBOSOMAL SUBUNIT PROTEIN US14M"/>
    <property type="match status" value="1"/>
</dbReference>
<dbReference type="Pfam" id="PF00253">
    <property type="entry name" value="Ribosomal_S14"/>
    <property type="match status" value="1"/>
</dbReference>
<dbReference type="SUPFAM" id="SSF57716">
    <property type="entry name" value="Glucocorticoid receptor-like (DNA-binding domain)"/>
    <property type="match status" value="1"/>
</dbReference>
<dbReference type="PROSITE" id="PS00527">
    <property type="entry name" value="RIBOSOMAL_S14"/>
    <property type="match status" value="1"/>
</dbReference>
<protein>
    <recommendedName>
        <fullName evidence="1">Small ribosomal subunit protein uS14</fullName>
    </recommendedName>
    <alternativeName>
        <fullName evidence="2">30S ribosomal protein S14</fullName>
    </alternativeName>
</protein>
<sequence length="100" mass="11778">MAKKSMIARDVKRKKLVERYATKRKKLLDEFNSAKDPMERLEIHRKIQALPRNSAPSRMRNRCWATGKPRGVYRDFGLCRNQLRERAHKGELPGVVKSSW</sequence>
<gene>
    <name evidence="1" type="primary">rpsN</name>
    <name evidence="1" type="synonym">rps14</name>
    <name type="ordered locus">P9211_12771</name>
</gene>
<organism>
    <name type="scientific">Prochlorococcus marinus (strain MIT 9211)</name>
    <dbReference type="NCBI Taxonomy" id="93059"/>
    <lineage>
        <taxon>Bacteria</taxon>
        <taxon>Bacillati</taxon>
        <taxon>Cyanobacteriota</taxon>
        <taxon>Cyanophyceae</taxon>
        <taxon>Synechococcales</taxon>
        <taxon>Prochlorococcaceae</taxon>
        <taxon>Prochlorococcus</taxon>
    </lineage>
</organism>
<reference key="1">
    <citation type="journal article" date="2007" name="PLoS Genet.">
        <title>Patterns and implications of gene gain and loss in the evolution of Prochlorococcus.</title>
        <authorList>
            <person name="Kettler G.C."/>
            <person name="Martiny A.C."/>
            <person name="Huang K."/>
            <person name="Zucker J."/>
            <person name="Coleman M.L."/>
            <person name="Rodrigue S."/>
            <person name="Chen F."/>
            <person name="Lapidus A."/>
            <person name="Ferriera S."/>
            <person name="Johnson J."/>
            <person name="Steglich C."/>
            <person name="Church G.M."/>
            <person name="Richardson P."/>
            <person name="Chisholm S.W."/>
        </authorList>
    </citation>
    <scope>NUCLEOTIDE SEQUENCE [LARGE SCALE GENOMIC DNA]</scope>
    <source>
        <strain>MIT 9211</strain>
    </source>
</reference>
<proteinExistence type="inferred from homology"/>
<name>RS14_PROM4</name>
<comment type="function">
    <text evidence="1">Binds 16S rRNA, required for the assembly of 30S particles and may also be responsible for determining the conformation of the 16S rRNA at the A site.</text>
</comment>
<comment type="subunit">
    <text evidence="1">Part of the 30S ribosomal subunit. Contacts proteins S3 and S10.</text>
</comment>
<comment type="similarity">
    <text evidence="1">Belongs to the universal ribosomal protein uS14 family.</text>
</comment>